<reference key="1">
    <citation type="journal article" date="2008" name="Infect. Immun.">
        <title>Genome of Mycoplasma arthritidis.</title>
        <authorList>
            <person name="Dybvig K."/>
            <person name="Zuhua C."/>
            <person name="Lao P."/>
            <person name="Jordan D.S."/>
            <person name="French C.T."/>
            <person name="Tu A.H."/>
            <person name="Loraine A.E."/>
        </authorList>
    </citation>
    <scope>NUCLEOTIDE SEQUENCE [LARGE SCALE GENOMIC DNA]</scope>
    <source>
        <strain>158L3-1</strain>
    </source>
</reference>
<organism>
    <name type="scientific">Metamycoplasma arthritidis (strain 158L3-1)</name>
    <name type="common">Mycoplasma arthritidis</name>
    <dbReference type="NCBI Taxonomy" id="243272"/>
    <lineage>
        <taxon>Bacteria</taxon>
        <taxon>Bacillati</taxon>
        <taxon>Mycoplasmatota</taxon>
        <taxon>Mycoplasmoidales</taxon>
        <taxon>Metamycoplasmataceae</taxon>
        <taxon>Metamycoplasma</taxon>
    </lineage>
</organism>
<gene>
    <name evidence="1" type="primary">engB</name>
    <name type="ordered locus">MARTH_orf693</name>
</gene>
<proteinExistence type="inferred from homology"/>
<name>ENGB_META1</name>
<protein>
    <recommendedName>
        <fullName evidence="1">Probable GTP-binding protein EngB</fullName>
    </recommendedName>
</protein>
<dbReference type="EMBL" id="CP001047">
    <property type="protein sequence ID" value="ACF07459.1"/>
    <property type="molecule type" value="Genomic_DNA"/>
</dbReference>
<dbReference type="RefSeq" id="WP_012498416.1">
    <property type="nucleotide sequence ID" value="NC_011025.1"/>
</dbReference>
<dbReference type="SMR" id="B3PN57"/>
<dbReference type="STRING" id="243272.MARTH_orf693"/>
<dbReference type="KEGG" id="mat:MARTH_orf693"/>
<dbReference type="eggNOG" id="COG0218">
    <property type="taxonomic scope" value="Bacteria"/>
</dbReference>
<dbReference type="HOGENOM" id="CLU_033732_3_2_14"/>
<dbReference type="Proteomes" id="UP000008812">
    <property type="component" value="Chromosome"/>
</dbReference>
<dbReference type="GO" id="GO:0005525">
    <property type="term" value="F:GTP binding"/>
    <property type="evidence" value="ECO:0007669"/>
    <property type="project" value="UniProtKB-UniRule"/>
</dbReference>
<dbReference type="GO" id="GO:0046872">
    <property type="term" value="F:metal ion binding"/>
    <property type="evidence" value="ECO:0007669"/>
    <property type="project" value="UniProtKB-KW"/>
</dbReference>
<dbReference type="GO" id="GO:0000917">
    <property type="term" value="P:division septum assembly"/>
    <property type="evidence" value="ECO:0007669"/>
    <property type="project" value="UniProtKB-KW"/>
</dbReference>
<dbReference type="CDD" id="cd01876">
    <property type="entry name" value="YihA_EngB"/>
    <property type="match status" value="1"/>
</dbReference>
<dbReference type="Gene3D" id="3.40.50.300">
    <property type="entry name" value="P-loop containing nucleotide triphosphate hydrolases"/>
    <property type="match status" value="1"/>
</dbReference>
<dbReference type="HAMAP" id="MF_00321">
    <property type="entry name" value="GTPase_EngB"/>
    <property type="match status" value="1"/>
</dbReference>
<dbReference type="InterPro" id="IPR030393">
    <property type="entry name" value="G_ENGB_dom"/>
</dbReference>
<dbReference type="InterPro" id="IPR006073">
    <property type="entry name" value="GTP-bd"/>
</dbReference>
<dbReference type="InterPro" id="IPR019987">
    <property type="entry name" value="GTP-bd_ribosome_bio_YsxC"/>
</dbReference>
<dbReference type="InterPro" id="IPR027417">
    <property type="entry name" value="P-loop_NTPase"/>
</dbReference>
<dbReference type="NCBIfam" id="TIGR03598">
    <property type="entry name" value="GTPase_YsxC"/>
    <property type="match status" value="1"/>
</dbReference>
<dbReference type="PANTHER" id="PTHR11649:SF13">
    <property type="entry name" value="ENGB-TYPE G DOMAIN-CONTAINING PROTEIN"/>
    <property type="match status" value="1"/>
</dbReference>
<dbReference type="PANTHER" id="PTHR11649">
    <property type="entry name" value="MSS1/TRME-RELATED GTP-BINDING PROTEIN"/>
    <property type="match status" value="1"/>
</dbReference>
<dbReference type="Pfam" id="PF01926">
    <property type="entry name" value="MMR_HSR1"/>
    <property type="match status" value="1"/>
</dbReference>
<dbReference type="SUPFAM" id="SSF52540">
    <property type="entry name" value="P-loop containing nucleoside triphosphate hydrolases"/>
    <property type="match status" value="1"/>
</dbReference>
<dbReference type="PROSITE" id="PS51706">
    <property type="entry name" value="G_ENGB"/>
    <property type="match status" value="1"/>
</dbReference>
<sequence>MWKFIKSATDQNNWLEHDQNEIVFWGRSNVGKSSLINALASQKIAKTSSTPGRTRLINYFETQRKKIIVDLPGYGFASMSKKAQSKISGIIDFYFRNSKNSKNICILIDAKIGFSYIDLEMIDYLKSLGLLFDIIITKIDKANQSQKHRVKQQALTFSDDINIFMVSSEKKQGLSDLVEHFEL</sequence>
<feature type="chain" id="PRO_1000115986" description="Probable GTP-binding protein EngB">
    <location>
        <begin position="1"/>
        <end position="183"/>
    </location>
</feature>
<feature type="domain" description="EngB-type G" evidence="1">
    <location>
        <begin position="18"/>
        <end position="183"/>
    </location>
</feature>
<feature type="binding site" evidence="1">
    <location>
        <begin position="26"/>
        <end position="33"/>
    </location>
    <ligand>
        <name>GTP</name>
        <dbReference type="ChEBI" id="CHEBI:37565"/>
    </ligand>
</feature>
<feature type="binding site" evidence="1">
    <location>
        <position position="33"/>
    </location>
    <ligand>
        <name>Mg(2+)</name>
        <dbReference type="ChEBI" id="CHEBI:18420"/>
    </ligand>
</feature>
<feature type="binding site" evidence="1">
    <location>
        <begin position="52"/>
        <end position="56"/>
    </location>
    <ligand>
        <name>GTP</name>
        <dbReference type="ChEBI" id="CHEBI:37565"/>
    </ligand>
</feature>
<feature type="binding site" evidence="1">
    <location>
        <position position="54"/>
    </location>
    <ligand>
        <name>Mg(2+)</name>
        <dbReference type="ChEBI" id="CHEBI:18420"/>
    </ligand>
</feature>
<feature type="binding site" evidence="1">
    <location>
        <begin position="70"/>
        <end position="73"/>
    </location>
    <ligand>
        <name>GTP</name>
        <dbReference type="ChEBI" id="CHEBI:37565"/>
    </ligand>
</feature>
<feature type="binding site" evidence="1">
    <location>
        <begin position="137"/>
        <end position="140"/>
    </location>
    <ligand>
        <name>GTP</name>
        <dbReference type="ChEBI" id="CHEBI:37565"/>
    </ligand>
</feature>
<feature type="binding site" evidence="1">
    <location>
        <begin position="166"/>
        <end position="168"/>
    </location>
    <ligand>
        <name>GTP</name>
        <dbReference type="ChEBI" id="CHEBI:37565"/>
    </ligand>
</feature>
<keyword id="KW-0131">Cell cycle</keyword>
<keyword id="KW-0132">Cell division</keyword>
<keyword id="KW-0342">GTP-binding</keyword>
<keyword id="KW-0460">Magnesium</keyword>
<keyword id="KW-0479">Metal-binding</keyword>
<keyword id="KW-0547">Nucleotide-binding</keyword>
<keyword id="KW-1185">Reference proteome</keyword>
<keyword id="KW-0717">Septation</keyword>
<comment type="function">
    <text evidence="1">Necessary for normal cell division and for the maintenance of normal septation.</text>
</comment>
<comment type="cofactor">
    <cofactor evidence="1">
        <name>Mg(2+)</name>
        <dbReference type="ChEBI" id="CHEBI:18420"/>
    </cofactor>
</comment>
<comment type="similarity">
    <text evidence="1">Belongs to the TRAFAC class TrmE-Era-EngA-EngB-Septin-like GTPase superfamily. EngB GTPase family.</text>
</comment>
<evidence type="ECO:0000255" key="1">
    <source>
        <dbReference type="HAMAP-Rule" id="MF_00321"/>
    </source>
</evidence>
<accession>B3PN57</accession>